<feature type="chain" id="PRO_0000417643" description="Trehalose-phosphate phosphatase A">
    <location>
        <begin position="1"/>
        <end position="385"/>
    </location>
</feature>
<feature type="region of interest" description="Disordered" evidence="2">
    <location>
        <begin position="1"/>
        <end position="21"/>
    </location>
</feature>
<feature type="splice variant" id="VSP_043862" description="In isoform 2." evidence="6">
    <location>
        <position position="99"/>
    </location>
</feature>
<organism>
    <name type="scientific">Arabidopsis thaliana</name>
    <name type="common">Mouse-ear cress</name>
    <dbReference type="NCBI Taxonomy" id="3702"/>
    <lineage>
        <taxon>Eukaryota</taxon>
        <taxon>Viridiplantae</taxon>
        <taxon>Streptophyta</taxon>
        <taxon>Embryophyta</taxon>
        <taxon>Tracheophyta</taxon>
        <taxon>Spermatophyta</taxon>
        <taxon>Magnoliopsida</taxon>
        <taxon>eudicotyledons</taxon>
        <taxon>Gunneridae</taxon>
        <taxon>Pentapetalae</taxon>
        <taxon>rosids</taxon>
        <taxon>malvids</taxon>
        <taxon>Brassicales</taxon>
        <taxon>Brassicaceae</taxon>
        <taxon>Camelineae</taxon>
        <taxon>Arabidopsis</taxon>
    </lineage>
</organism>
<name>TPPA_ARATH</name>
<accession>O64896</accession>
<accession>Q8RWE2</accession>
<evidence type="ECO:0000250" key="1"/>
<evidence type="ECO:0000256" key="2">
    <source>
        <dbReference type="SAM" id="MobiDB-lite"/>
    </source>
</evidence>
<evidence type="ECO:0000269" key="3">
    <source>
    </source>
</evidence>
<evidence type="ECO:0000269" key="4">
    <source>
    </source>
</evidence>
<evidence type="ECO:0000269" key="5">
    <source>
    </source>
</evidence>
<evidence type="ECO:0000303" key="6">
    <source>
    </source>
</evidence>
<evidence type="ECO:0000305" key="7"/>
<gene>
    <name type="primary">TPPA</name>
    <name type="ordered locus">At5g51460</name>
    <name type="ORF">K17N15.1</name>
    <name type="ORF">MFG13.17</name>
</gene>
<dbReference type="EC" id="3.1.3.12"/>
<dbReference type="EMBL" id="AF007778">
    <property type="protein sequence ID" value="AAC39369.1"/>
    <property type="molecule type" value="mRNA"/>
</dbReference>
<dbReference type="EMBL" id="AB018109">
    <property type="protein sequence ID" value="BAB08662.1"/>
    <property type="molecule type" value="Genomic_DNA"/>
</dbReference>
<dbReference type="EMBL" id="CP002688">
    <property type="protein sequence ID" value="AED96085.1"/>
    <property type="molecule type" value="Genomic_DNA"/>
</dbReference>
<dbReference type="EMBL" id="CP002688">
    <property type="protein sequence ID" value="AED96086.1"/>
    <property type="molecule type" value="Genomic_DNA"/>
</dbReference>
<dbReference type="EMBL" id="CP002688">
    <property type="protein sequence ID" value="AED96087.1"/>
    <property type="molecule type" value="Genomic_DNA"/>
</dbReference>
<dbReference type="EMBL" id="CP002688">
    <property type="protein sequence ID" value="ANM70853.1"/>
    <property type="molecule type" value="Genomic_DNA"/>
</dbReference>
<dbReference type="EMBL" id="CP002688">
    <property type="protein sequence ID" value="ANM70854.1"/>
    <property type="molecule type" value="Genomic_DNA"/>
</dbReference>
<dbReference type="EMBL" id="AY093147">
    <property type="protein sequence ID" value="AAM13146.1"/>
    <property type="molecule type" value="mRNA"/>
</dbReference>
<dbReference type="EMBL" id="BT008467">
    <property type="protein sequence ID" value="AAP37826.1"/>
    <property type="molecule type" value="mRNA"/>
</dbReference>
<dbReference type="PIR" id="T52057">
    <property type="entry name" value="T52057"/>
</dbReference>
<dbReference type="RefSeq" id="NP_001332431.1">
    <molecule id="O64896-2"/>
    <property type="nucleotide sequence ID" value="NM_001344937.1"/>
</dbReference>
<dbReference type="RefSeq" id="NP_001332432.1">
    <molecule id="O64896-1"/>
    <property type="nucleotide sequence ID" value="NM_001344938.1"/>
</dbReference>
<dbReference type="RefSeq" id="NP_199959.2">
    <molecule id="O64896-2"/>
    <property type="nucleotide sequence ID" value="NM_124525.2"/>
</dbReference>
<dbReference type="RefSeq" id="NP_851171.1">
    <molecule id="O64896-1"/>
    <property type="nucleotide sequence ID" value="NM_180840.2"/>
</dbReference>
<dbReference type="RefSeq" id="NP_974922.1">
    <molecule id="O64896-1"/>
    <property type="nucleotide sequence ID" value="NM_203193.3"/>
</dbReference>
<dbReference type="SMR" id="O64896"/>
<dbReference type="FunCoup" id="O64896">
    <property type="interactions" value="172"/>
</dbReference>
<dbReference type="STRING" id="3702.O64896"/>
<dbReference type="iPTMnet" id="O64896"/>
<dbReference type="PaxDb" id="3702-AT5G51460.1"/>
<dbReference type="ProteomicsDB" id="232380">
    <molecule id="O64896-1"/>
</dbReference>
<dbReference type="EnsemblPlants" id="AT5G51460.1">
    <molecule id="O64896-1"/>
    <property type="protein sequence ID" value="AT5G51460.1"/>
    <property type="gene ID" value="AT5G51460"/>
</dbReference>
<dbReference type="EnsemblPlants" id="AT5G51460.2">
    <molecule id="O64896-2"/>
    <property type="protein sequence ID" value="AT5G51460.2"/>
    <property type="gene ID" value="AT5G51460"/>
</dbReference>
<dbReference type="EnsemblPlants" id="AT5G51460.3">
    <molecule id="O64896-1"/>
    <property type="protein sequence ID" value="AT5G51460.3"/>
    <property type="gene ID" value="AT5G51460"/>
</dbReference>
<dbReference type="EnsemblPlants" id="AT5G51460.4">
    <molecule id="O64896-2"/>
    <property type="protein sequence ID" value="AT5G51460.4"/>
    <property type="gene ID" value="AT5G51460"/>
</dbReference>
<dbReference type="EnsemblPlants" id="AT5G51460.5">
    <molecule id="O64896-1"/>
    <property type="protein sequence ID" value="AT5G51460.5"/>
    <property type="gene ID" value="AT5G51460"/>
</dbReference>
<dbReference type="GeneID" id="835220"/>
<dbReference type="Gramene" id="AT5G51460.1">
    <molecule id="O64896-1"/>
    <property type="protein sequence ID" value="AT5G51460.1"/>
    <property type="gene ID" value="AT5G51460"/>
</dbReference>
<dbReference type="Gramene" id="AT5G51460.2">
    <molecule id="O64896-2"/>
    <property type="protein sequence ID" value="AT5G51460.2"/>
    <property type="gene ID" value="AT5G51460"/>
</dbReference>
<dbReference type="Gramene" id="AT5G51460.3">
    <molecule id="O64896-1"/>
    <property type="protein sequence ID" value="AT5G51460.3"/>
    <property type="gene ID" value="AT5G51460"/>
</dbReference>
<dbReference type="Gramene" id="AT5G51460.4">
    <molecule id="O64896-2"/>
    <property type="protein sequence ID" value="AT5G51460.4"/>
    <property type="gene ID" value="AT5G51460"/>
</dbReference>
<dbReference type="Gramene" id="AT5G51460.5">
    <molecule id="O64896-1"/>
    <property type="protein sequence ID" value="AT5G51460.5"/>
    <property type="gene ID" value="AT5G51460"/>
</dbReference>
<dbReference type="KEGG" id="ath:AT5G51460"/>
<dbReference type="Araport" id="AT5G51460"/>
<dbReference type="TAIR" id="AT5G51460">
    <property type="gene designation" value="ATTPPA"/>
</dbReference>
<dbReference type="eggNOG" id="KOG1050">
    <property type="taxonomic scope" value="Eukaryota"/>
</dbReference>
<dbReference type="HOGENOM" id="CLU_037265_1_0_1"/>
<dbReference type="InParanoid" id="O64896"/>
<dbReference type="OMA" id="ATHANYY"/>
<dbReference type="OrthoDB" id="411251at2759"/>
<dbReference type="PhylomeDB" id="O64896"/>
<dbReference type="BioCyc" id="ARA:AT5G51460-MONOMER"/>
<dbReference type="UniPathway" id="UPA00299"/>
<dbReference type="PRO" id="PR:O64896"/>
<dbReference type="Proteomes" id="UP000006548">
    <property type="component" value="Chromosome 5"/>
</dbReference>
<dbReference type="ExpressionAtlas" id="O64896">
    <property type="expression patterns" value="baseline and differential"/>
</dbReference>
<dbReference type="GO" id="GO:0004805">
    <property type="term" value="F:trehalose-phosphatase activity"/>
    <property type="evidence" value="ECO:0000314"/>
    <property type="project" value="TAIR"/>
</dbReference>
<dbReference type="GO" id="GO:0005992">
    <property type="term" value="P:trehalose biosynthetic process"/>
    <property type="evidence" value="ECO:0000314"/>
    <property type="project" value="TAIR"/>
</dbReference>
<dbReference type="CDD" id="cd01627">
    <property type="entry name" value="HAD_TPP"/>
    <property type="match status" value="1"/>
</dbReference>
<dbReference type="FunFam" id="3.30.70.1020:FF:000004">
    <property type="entry name" value="Trehalose 6-phosphate phosphatase"/>
    <property type="match status" value="1"/>
</dbReference>
<dbReference type="FunFam" id="3.40.50.1000:FF:000073">
    <property type="entry name" value="Trehalose 6-phosphate phosphatase"/>
    <property type="match status" value="1"/>
</dbReference>
<dbReference type="Gene3D" id="3.40.50.1000">
    <property type="entry name" value="HAD superfamily/HAD-like"/>
    <property type="match status" value="1"/>
</dbReference>
<dbReference type="Gene3D" id="3.30.70.1020">
    <property type="entry name" value="Trehalose-6-phosphate phosphatase related protein, domain 2"/>
    <property type="match status" value="1"/>
</dbReference>
<dbReference type="InterPro" id="IPR036412">
    <property type="entry name" value="HAD-like_sf"/>
</dbReference>
<dbReference type="InterPro" id="IPR006379">
    <property type="entry name" value="HAD-SF_hydro_IIB"/>
</dbReference>
<dbReference type="InterPro" id="IPR023214">
    <property type="entry name" value="HAD_sf"/>
</dbReference>
<dbReference type="InterPro" id="IPR044651">
    <property type="entry name" value="OTSB-like"/>
</dbReference>
<dbReference type="InterPro" id="IPR003337">
    <property type="entry name" value="Trehalose_PPase"/>
</dbReference>
<dbReference type="NCBIfam" id="TIGR01484">
    <property type="entry name" value="HAD-SF-IIB"/>
    <property type="match status" value="1"/>
</dbReference>
<dbReference type="NCBIfam" id="TIGR00685">
    <property type="entry name" value="T6PP"/>
    <property type="match status" value="1"/>
</dbReference>
<dbReference type="PANTHER" id="PTHR43768">
    <property type="entry name" value="TREHALOSE 6-PHOSPHATE PHOSPHATASE"/>
    <property type="match status" value="1"/>
</dbReference>
<dbReference type="PANTHER" id="PTHR43768:SF27">
    <property type="entry name" value="TREHALOSE-PHOSPHATE PHOSPHATASE A"/>
    <property type="match status" value="1"/>
</dbReference>
<dbReference type="Pfam" id="PF02358">
    <property type="entry name" value="Trehalose_PPase"/>
    <property type="match status" value="1"/>
</dbReference>
<dbReference type="SUPFAM" id="SSF56784">
    <property type="entry name" value="HAD-like"/>
    <property type="match status" value="1"/>
</dbReference>
<proteinExistence type="evidence at protein level"/>
<protein>
    <recommendedName>
        <fullName>Trehalose-phosphate phosphatase A</fullName>
        <shortName>AtTPPA</shortName>
        <ecNumber>3.1.3.12</ecNumber>
    </recommendedName>
    <alternativeName>
        <fullName>Trehalose 6-phosphate phosphatase</fullName>
    </alternativeName>
</protein>
<comment type="function">
    <text evidence="3 5">Removes the phosphate from trehalose 6-phosphate to produce free trehalose. Trehalose accumulation in plant may improve abiotic stress tolerance.</text>
</comment>
<comment type="catalytic activity">
    <reaction evidence="5">
        <text>alpha,alpha-trehalose 6-phosphate + H2O = alpha,alpha-trehalose + phosphate</text>
        <dbReference type="Rhea" id="RHEA:23420"/>
        <dbReference type="ChEBI" id="CHEBI:15377"/>
        <dbReference type="ChEBI" id="CHEBI:16551"/>
        <dbReference type="ChEBI" id="CHEBI:43474"/>
        <dbReference type="ChEBI" id="CHEBI:58429"/>
        <dbReference type="EC" id="3.1.3.12"/>
    </reaction>
</comment>
<comment type="cofactor">
    <cofactor evidence="1">
        <name>a divalent metal cation</name>
        <dbReference type="ChEBI" id="CHEBI:60240"/>
    </cofactor>
</comment>
<comment type="pathway">
    <text>Glycan biosynthesis; trehalose biosynthesis.</text>
</comment>
<comment type="alternative products">
    <event type="alternative splicing"/>
    <isoform>
        <id>O64896-1</id>
        <name>1</name>
        <sequence type="displayed"/>
    </isoform>
    <isoform>
        <id>O64896-2</id>
        <name>2</name>
        <sequence type="described" ref="VSP_043862"/>
    </isoform>
</comment>
<comment type="tissue specificity">
    <text evidence="5">Expressed in flowers.</text>
</comment>
<comment type="induction">
    <text evidence="4">By trehalose.</text>
</comment>
<comment type="miscellaneous">
    <molecule>Isoform 2</molecule>
    <text evidence="7">May be due to a competing acceptor splice site.</text>
</comment>
<comment type="similarity">
    <text evidence="7">Belongs to the trehalose phosphatase family.</text>
</comment>
<reference key="1">
    <citation type="journal article" date="1998" name="Plant J.">
        <title>Trehalose-6-phosphate phosphatases from Arabidopsis thaliana: identification by functional complementation of the yeast tps2 mutant.</title>
        <authorList>
            <person name="Vogel G."/>
            <person name="Aeschbacher R.A."/>
            <person name="Muller J."/>
            <person name="Boller T."/>
            <person name="Wiemken A."/>
        </authorList>
    </citation>
    <scope>NUCLEOTIDE SEQUENCE [MRNA] (ISOFORM 1)</scope>
    <scope>FUNCTION</scope>
    <scope>CATALYTIC ACTIVITY</scope>
    <scope>TISSUE SPECIFICITY</scope>
    <source>
        <strain>cv. Landsberg erecta</strain>
    </source>
</reference>
<reference key="2">
    <citation type="journal article" date="2000" name="DNA Res.">
        <title>Structural analysis of Arabidopsis thaliana chromosome 5. X. Sequence features of the regions of 3,076,755 bp covered by sixty P1 and TAC clones.</title>
        <authorList>
            <person name="Sato S."/>
            <person name="Nakamura Y."/>
            <person name="Kaneko T."/>
            <person name="Katoh T."/>
            <person name="Asamizu E."/>
            <person name="Kotani H."/>
            <person name="Tabata S."/>
        </authorList>
    </citation>
    <scope>NUCLEOTIDE SEQUENCE [LARGE SCALE GENOMIC DNA]</scope>
    <source>
        <strain>cv. Columbia</strain>
    </source>
</reference>
<reference key="3">
    <citation type="journal article" date="2017" name="Plant J.">
        <title>Araport11: a complete reannotation of the Arabidopsis thaliana reference genome.</title>
        <authorList>
            <person name="Cheng C.Y."/>
            <person name="Krishnakumar V."/>
            <person name="Chan A.P."/>
            <person name="Thibaud-Nissen F."/>
            <person name="Schobel S."/>
            <person name="Town C.D."/>
        </authorList>
    </citation>
    <scope>GENOME REANNOTATION</scope>
    <source>
        <strain>cv. Columbia</strain>
    </source>
</reference>
<reference key="4">
    <citation type="journal article" date="2003" name="Science">
        <title>Empirical analysis of transcriptional activity in the Arabidopsis genome.</title>
        <authorList>
            <person name="Yamada K."/>
            <person name="Lim J."/>
            <person name="Dale J.M."/>
            <person name="Chen H."/>
            <person name="Shinn P."/>
            <person name="Palm C.J."/>
            <person name="Southwick A.M."/>
            <person name="Wu H.C."/>
            <person name="Kim C.J."/>
            <person name="Nguyen M."/>
            <person name="Pham P.K."/>
            <person name="Cheuk R.F."/>
            <person name="Karlin-Newmann G."/>
            <person name="Liu S.X."/>
            <person name="Lam B."/>
            <person name="Sakano H."/>
            <person name="Wu T."/>
            <person name="Yu G."/>
            <person name="Miranda M."/>
            <person name="Quach H.L."/>
            <person name="Tripp M."/>
            <person name="Chang C.H."/>
            <person name="Lee J.M."/>
            <person name="Toriumi M.J."/>
            <person name="Chan M.M."/>
            <person name="Tang C.C."/>
            <person name="Onodera C.S."/>
            <person name="Deng J.M."/>
            <person name="Akiyama K."/>
            <person name="Ansari Y."/>
            <person name="Arakawa T."/>
            <person name="Banh J."/>
            <person name="Banno F."/>
            <person name="Bowser L."/>
            <person name="Brooks S.Y."/>
            <person name="Carninci P."/>
            <person name="Chao Q."/>
            <person name="Choy N."/>
            <person name="Enju A."/>
            <person name="Goldsmith A.D."/>
            <person name="Gurjal M."/>
            <person name="Hansen N.F."/>
            <person name="Hayashizaki Y."/>
            <person name="Johnson-Hopson C."/>
            <person name="Hsuan V.W."/>
            <person name="Iida K."/>
            <person name="Karnes M."/>
            <person name="Khan S."/>
            <person name="Koesema E."/>
            <person name="Ishida J."/>
            <person name="Jiang P.X."/>
            <person name="Jones T."/>
            <person name="Kawai J."/>
            <person name="Kamiya A."/>
            <person name="Meyers C."/>
            <person name="Nakajima M."/>
            <person name="Narusaka M."/>
            <person name="Seki M."/>
            <person name="Sakurai T."/>
            <person name="Satou M."/>
            <person name="Tamse R."/>
            <person name="Vaysberg M."/>
            <person name="Wallender E.K."/>
            <person name="Wong C."/>
            <person name="Yamamura Y."/>
            <person name="Yuan S."/>
            <person name="Shinozaki K."/>
            <person name="Davis R.W."/>
            <person name="Theologis A."/>
            <person name="Ecker J.R."/>
        </authorList>
    </citation>
    <scope>NUCLEOTIDE SEQUENCE [LARGE SCALE MRNA] (ISOFORM 2)</scope>
    <source>
        <strain>cv. Columbia</strain>
    </source>
</reference>
<reference key="5">
    <citation type="journal article" date="2001" name="J. Exp. Bot.">
        <title>Trehalose metabolism in Arabidopsis: occurrence of trehalose and molecular cloning and characterization of trehalose-6-phosphate synthase homologues.</title>
        <authorList>
            <person name="Vogel G."/>
            <person name="Fiehn O."/>
            <person name="Jean-Richard-dit-Bressel L."/>
            <person name="Boller T."/>
            <person name="Wiemken A."/>
            <person name="Aeschbacher R.A."/>
            <person name="Wingler A."/>
        </authorList>
    </citation>
    <scope>FUNCTION</scope>
</reference>
<reference key="6">
    <citation type="journal article" date="2003" name="J. Exp. Bot.">
        <title>Is trehalose-6-phosphate a regulator of sugar metabolism in plants?</title>
        <authorList>
            <person name="Eastmond P.J."/>
            <person name="Li Y."/>
            <person name="Graham I.A."/>
        </authorList>
    </citation>
    <scope>GENE FAMILY</scope>
</reference>
<reference key="7">
    <citation type="journal article" date="2004" name="Plant Physiol.">
        <title>Trehalose mediated growth inhibition of Arabidopsis seedlings is due to trehalose-6-phosphate accumulation.</title>
        <authorList>
            <person name="Schluepmann H."/>
            <person name="van Dijken A.J.H."/>
            <person name="Aghdasi M."/>
            <person name="Wobbes B."/>
            <person name="Paul M."/>
            <person name="Smeekens S.C.M."/>
        </authorList>
    </citation>
    <scope>INDUCTION</scope>
    <scope>NOMENCLATURE</scope>
</reference>
<keyword id="KW-0025">Alternative splicing</keyword>
<keyword id="KW-0378">Hydrolase</keyword>
<keyword id="KW-1185">Reference proteome</keyword>
<keyword id="KW-0346">Stress response</keyword>
<sequence>MDMKSGHSSPVMTDSPPISNSRLTIRQNRLPYSSAAATAISQNNNLLLTVPRKKTGILDDVKSNGWLDAMKSSSPPPTILNKDNLSNDATDMTYREWMQLKYPSALTSFEKIMSFAKGKRIALFLDYDGTLSPIVEEPDCAYMSSAMRSAVQNVAKYFPTAIISGRSRDKVYEFVNLSELYYAGSHGMDIMSPAGESLNHEHSRTVSVYEQGKDVNLFQPASEFLPMIDKVLCSLIESTKDIKGVKVEDNKFCISVHYRNVEEKNWTLVAQCVDDVIRTYPKLRLTHGRKVLEIRPVIDWDKGKAVTFLLESLGLNNCEDVLPIYVGDDRTDEDAFKVLRDGPNHGYGILVSAVPKDSNAFYSLRDPSEVMEFLKSLVTWKRSMG</sequence>